<name>NUD22_MOUSE</name>
<keyword id="KW-0378">Hydrolase</keyword>
<keyword id="KW-0460">Magnesium</keyword>
<keyword id="KW-0479">Metal-binding</keyword>
<keyword id="KW-1185">Reference proteome</keyword>
<proteinExistence type="evidence at transcript level"/>
<feature type="chain" id="PRO_0000263732" description="Uridine diphosphate glucose pyrophosphatase NUDT22">
    <location>
        <begin position="1"/>
        <end position="308"/>
    </location>
</feature>
<feature type="domain" description="Nudix hydrolase" evidence="2">
    <location>
        <begin position="117"/>
        <end position="284"/>
    </location>
</feature>
<feature type="short sequence motif" description="Nudix box" evidence="1">
    <location>
        <begin position="174"/>
        <end position="195"/>
    </location>
</feature>
<feature type="binding site" evidence="1">
    <location>
        <position position="56"/>
    </location>
    <ligand>
        <name>substrate</name>
    </ligand>
</feature>
<feature type="binding site" evidence="1">
    <location>
        <position position="86"/>
    </location>
    <ligand>
        <name>substrate</name>
    </ligand>
</feature>
<feature type="binding site" evidence="1">
    <location>
        <position position="138"/>
    </location>
    <ligand>
        <name>substrate</name>
    </ligand>
</feature>
<feature type="binding site" evidence="1">
    <location>
        <position position="143"/>
    </location>
    <ligand>
        <name>substrate</name>
    </ligand>
</feature>
<feature type="binding site" evidence="1">
    <location>
        <position position="150"/>
    </location>
    <ligand>
        <name>substrate</name>
    </ligand>
</feature>
<feature type="binding site" evidence="1">
    <location>
        <position position="155"/>
    </location>
    <ligand>
        <name>substrate</name>
    </ligand>
</feature>
<feature type="binding site" evidence="1">
    <location>
        <position position="157"/>
    </location>
    <ligand>
        <name>substrate</name>
    </ligand>
</feature>
<feature type="binding site" evidence="1">
    <location>
        <position position="188"/>
    </location>
    <ligand>
        <name>Mg(2+)</name>
        <dbReference type="ChEBI" id="CHEBI:18420"/>
    </ligand>
</feature>
<feature type="binding site" evidence="1">
    <location>
        <position position="192"/>
    </location>
    <ligand>
        <name>Mg(2+)</name>
        <dbReference type="ChEBI" id="CHEBI:18420"/>
    </ligand>
</feature>
<feature type="binding site" evidence="1">
    <location>
        <position position="273"/>
    </location>
    <ligand>
        <name>substrate</name>
    </ligand>
</feature>
<feature type="sequence conflict" description="In Ref. 2; AAH19768." evidence="3" ref="2">
    <original>L</original>
    <variation>E</variation>
    <location>
        <position position="175"/>
    </location>
</feature>
<dbReference type="EC" id="3.6.1.45"/>
<dbReference type="EMBL" id="AK002252">
    <property type="protein sequence ID" value="BAB21966.1"/>
    <property type="molecule type" value="mRNA"/>
</dbReference>
<dbReference type="EMBL" id="BC019768">
    <property type="protein sequence ID" value="AAH19768.1"/>
    <property type="molecule type" value="mRNA"/>
</dbReference>
<dbReference type="CCDS" id="CCDS29517.1"/>
<dbReference type="RefSeq" id="NP_080951.1">
    <property type="nucleotide sequence ID" value="NM_026675.2"/>
</dbReference>
<dbReference type="SMR" id="Q9DD16"/>
<dbReference type="FunCoup" id="Q9DD16">
    <property type="interactions" value="420"/>
</dbReference>
<dbReference type="STRING" id="10090.ENSMUSP00000137738"/>
<dbReference type="iPTMnet" id="Q9DD16"/>
<dbReference type="PhosphoSitePlus" id="Q9DD16"/>
<dbReference type="PaxDb" id="10090-ENSMUSP00000041419"/>
<dbReference type="ProteomicsDB" id="293780"/>
<dbReference type="Pumba" id="Q9DD16"/>
<dbReference type="Antibodypedia" id="51889">
    <property type="antibodies" value="87 antibodies from 18 providers"/>
</dbReference>
<dbReference type="DNASU" id="68323"/>
<dbReference type="Ensembl" id="ENSMUST00000041686.10">
    <property type="protein sequence ID" value="ENSMUSP00000041419.3"/>
    <property type="gene ID" value="ENSMUSG00000037349.10"/>
</dbReference>
<dbReference type="Ensembl" id="ENSMUST00000180765.2">
    <property type="protein sequence ID" value="ENSMUSP00000137738.2"/>
    <property type="gene ID" value="ENSMUSG00000037349.10"/>
</dbReference>
<dbReference type="GeneID" id="68323"/>
<dbReference type="KEGG" id="mmu:68323"/>
<dbReference type="UCSC" id="uc008gjz.1">
    <property type="organism name" value="mouse"/>
</dbReference>
<dbReference type="AGR" id="MGI:1915573"/>
<dbReference type="CTD" id="84304"/>
<dbReference type="MGI" id="MGI:1915573">
    <property type="gene designation" value="Nudt22"/>
</dbReference>
<dbReference type="VEuPathDB" id="HostDB:ENSMUSG00000037349"/>
<dbReference type="eggNOG" id="ENOG502QRSW">
    <property type="taxonomic scope" value="Eukaryota"/>
</dbReference>
<dbReference type="GeneTree" id="ENSGT00390000017869"/>
<dbReference type="HOGENOM" id="CLU_061819_1_0_1"/>
<dbReference type="InParanoid" id="Q9DD16"/>
<dbReference type="OMA" id="TCYRDFI"/>
<dbReference type="OrthoDB" id="242473at2759"/>
<dbReference type="PhylomeDB" id="Q9DD16"/>
<dbReference type="TreeFam" id="TF106357"/>
<dbReference type="BioGRID-ORCS" id="68323">
    <property type="hits" value="1 hit in 76 CRISPR screens"/>
</dbReference>
<dbReference type="PRO" id="PR:Q9DD16"/>
<dbReference type="Proteomes" id="UP000000589">
    <property type="component" value="Chromosome 19"/>
</dbReference>
<dbReference type="RNAct" id="Q9DD16">
    <property type="molecule type" value="protein"/>
</dbReference>
<dbReference type="Bgee" id="ENSMUSG00000037349">
    <property type="expression patterns" value="Expressed in lacrimal gland and 205 other cell types or tissues"/>
</dbReference>
<dbReference type="GO" id="GO:0005654">
    <property type="term" value="C:nucleoplasm"/>
    <property type="evidence" value="ECO:0007669"/>
    <property type="project" value="Ensembl"/>
</dbReference>
<dbReference type="GO" id="GO:0046872">
    <property type="term" value="F:metal ion binding"/>
    <property type="evidence" value="ECO:0000250"/>
    <property type="project" value="UniProtKB"/>
</dbReference>
<dbReference type="GO" id="GO:0008768">
    <property type="term" value="F:UDP-sugar diphosphatase activity"/>
    <property type="evidence" value="ECO:0000250"/>
    <property type="project" value="UniProtKB"/>
</dbReference>
<dbReference type="InterPro" id="IPR000086">
    <property type="entry name" value="NUDIX_hydrolase_dom"/>
</dbReference>
<dbReference type="InterPro" id="IPR055295">
    <property type="entry name" value="NUDT22/NUDT9-like"/>
</dbReference>
<dbReference type="PANTHER" id="PTHR31835">
    <property type="entry name" value="URIDINE DIPHOSPHATE GLUCOSE PYROPHOSPHATASE"/>
    <property type="match status" value="1"/>
</dbReference>
<dbReference type="PANTHER" id="PTHR31835:SF1">
    <property type="entry name" value="URIDINE DIPHOSPHATE GLUCOSE PYROPHOSPHATASE NUDT22"/>
    <property type="match status" value="1"/>
</dbReference>
<dbReference type="PROSITE" id="PS51462">
    <property type="entry name" value="NUDIX"/>
    <property type="match status" value="1"/>
</dbReference>
<gene>
    <name type="primary">Nudt22</name>
</gene>
<organism>
    <name type="scientific">Mus musculus</name>
    <name type="common">Mouse</name>
    <dbReference type="NCBI Taxonomy" id="10090"/>
    <lineage>
        <taxon>Eukaryota</taxon>
        <taxon>Metazoa</taxon>
        <taxon>Chordata</taxon>
        <taxon>Craniata</taxon>
        <taxon>Vertebrata</taxon>
        <taxon>Euteleostomi</taxon>
        <taxon>Mammalia</taxon>
        <taxon>Eutheria</taxon>
        <taxon>Euarchontoglires</taxon>
        <taxon>Glires</taxon>
        <taxon>Rodentia</taxon>
        <taxon>Myomorpha</taxon>
        <taxon>Muroidea</taxon>
        <taxon>Muridae</taxon>
        <taxon>Murinae</taxon>
        <taxon>Mus</taxon>
        <taxon>Mus</taxon>
    </lineage>
</organism>
<protein>
    <recommendedName>
        <fullName>Uridine diphosphate glucose pyrophosphatase NUDT22</fullName>
        <shortName>UDPG pyrophosphatase</shortName>
        <shortName>UGPPase</shortName>
        <ecNumber>3.6.1.45</ecNumber>
    </recommendedName>
    <alternativeName>
        <fullName>Nucleoside diphosphate-linked moiety X motif 22</fullName>
        <shortName>Nudix motif 22</shortName>
    </alternativeName>
</protein>
<accession>Q9DD16</accession>
<accession>Q8VCI4</accession>
<reference key="1">
    <citation type="journal article" date="2005" name="Science">
        <title>The transcriptional landscape of the mammalian genome.</title>
        <authorList>
            <person name="Carninci P."/>
            <person name="Kasukawa T."/>
            <person name="Katayama S."/>
            <person name="Gough J."/>
            <person name="Frith M.C."/>
            <person name="Maeda N."/>
            <person name="Oyama R."/>
            <person name="Ravasi T."/>
            <person name="Lenhard B."/>
            <person name="Wells C."/>
            <person name="Kodzius R."/>
            <person name="Shimokawa K."/>
            <person name="Bajic V.B."/>
            <person name="Brenner S.E."/>
            <person name="Batalov S."/>
            <person name="Forrest A.R."/>
            <person name="Zavolan M."/>
            <person name="Davis M.J."/>
            <person name="Wilming L.G."/>
            <person name="Aidinis V."/>
            <person name="Allen J.E."/>
            <person name="Ambesi-Impiombato A."/>
            <person name="Apweiler R."/>
            <person name="Aturaliya R.N."/>
            <person name="Bailey T.L."/>
            <person name="Bansal M."/>
            <person name="Baxter L."/>
            <person name="Beisel K.W."/>
            <person name="Bersano T."/>
            <person name="Bono H."/>
            <person name="Chalk A.M."/>
            <person name="Chiu K.P."/>
            <person name="Choudhary V."/>
            <person name="Christoffels A."/>
            <person name="Clutterbuck D.R."/>
            <person name="Crowe M.L."/>
            <person name="Dalla E."/>
            <person name="Dalrymple B.P."/>
            <person name="de Bono B."/>
            <person name="Della Gatta G."/>
            <person name="di Bernardo D."/>
            <person name="Down T."/>
            <person name="Engstrom P."/>
            <person name="Fagiolini M."/>
            <person name="Faulkner G."/>
            <person name="Fletcher C.F."/>
            <person name="Fukushima T."/>
            <person name="Furuno M."/>
            <person name="Futaki S."/>
            <person name="Gariboldi M."/>
            <person name="Georgii-Hemming P."/>
            <person name="Gingeras T.R."/>
            <person name="Gojobori T."/>
            <person name="Green R.E."/>
            <person name="Gustincich S."/>
            <person name="Harbers M."/>
            <person name="Hayashi Y."/>
            <person name="Hensch T.K."/>
            <person name="Hirokawa N."/>
            <person name="Hill D."/>
            <person name="Huminiecki L."/>
            <person name="Iacono M."/>
            <person name="Ikeo K."/>
            <person name="Iwama A."/>
            <person name="Ishikawa T."/>
            <person name="Jakt M."/>
            <person name="Kanapin A."/>
            <person name="Katoh M."/>
            <person name="Kawasawa Y."/>
            <person name="Kelso J."/>
            <person name="Kitamura H."/>
            <person name="Kitano H."/>
            <person name="Kollias G."/>
            <person name="Krishnan S.P."/>
            <person name="Kruger A."/>
            <person name="Kummerfeld S.K."/>
            <person name="Kurochkin I.V."/>
            <person name="Lareau L.F."/>
            <person name="Lazarevic D."/>
            <person name="Lipovich L."/>
            <person name="Liu J."/>
            <person name="Liuni S."/>
            <person name="McWilliam S."/>
            <person name="Madan Babu M."/>
            <person name="Madera M."/>
            <person name="Marchionni L."/>
            <person name="Matsuda H."/>
            <person name="Matsuzawa S."/>
            <person name="Miki H."/>
            <person name="Mignone F."/>
            <person name="Miyake S."/>
            <person name="Morris K."/>
            <person name="Mottagui-Tabar S."/>
            <person name="Mulder N."/>
            <person name="Nakano N."/>
            <person name="Nakauchi H."/>
            <person name="Ng P."/>
            <person name="Nilsson R."/>
            <person name="Nishiguchi S."/>
            <person name="Nishikawa S."/>
            <person name="Nori F."/>
            <person name="Ohara O."/>
            <person name="Okazaki Y."/>
            <person name="Orlando V."/>
            <person name="Pang K.C."/>
            <person name="Pavan W.J."/>
            <person name="Pavesi G."/>
            <person name="Pesole G."/>
            <person name="Petrovsky N."/>
            <person name="Piazza S."/>
            <person name="Reed J."/>
            <person name="Reid J.F."/>
            <person name="Ring B.Z."/>
            <person name="Ringwald M."/>
            <person name="Rost B."/>
            <person name="Ruan Y."/>
            <person name="Salzberg S.L."/>
            <person name="Sandelin A."/>
            <person name="Schneider C."/>
            <person name="Schoenbach C."/>
            <person name="Sekiguchi K."/>
            <person name="Semple C.A."/>
            <person name="Seno S."/>
            <person name="Sessa L."/>
            <person name="Sheng Y."/>
            <person name="Shibata Y."/>
            <person name="Shimada H."/>
            <person name="Shimada K."/>
            <person name="Silva D."/>
            <person name="Sinclair B."/>
            <person name="Sperling S."/>
            <person name="Stupka E."/>
            <person name="Sugiura K."/>
            <person name="Sultana R."/>
            <person name="Takenaka Y."/>
            <person name="Taki K."/>
            <person name="Tammoja K."/>
            <person name="Tan S.L."/>
            <person name="Tang S."/>
            <person name="Taylor M.S."/>
            <person name="Tegner J."/>
            <person name="Teichmann S.A."/>
            <person name="Ueda H.R."/>
            <person name="van Nimwegen E."/>
            <person name="Verardo R."/>
            <person name="Wei C.L."/>
            <person name="Yagi K."/>
            <person name="Yamanishi H."/>
            <person name="Zabarovsky E."/>
            <person name="Zhu S."/>
            <person name="Zimmer A."/>
            <person name="Hide W."/>
            <person name="Bult C."/>
            <person name="Grimmond S.M."/>
            <person name="Teasdale R.D."/>
            <person name="Liu E.T."/>
            <person name="Brusic V."/>
            <person name="Quackenbush J."/>
            <person name="Wahlestedt C."/>
            <person name="Mattick J.S."/>
            <person name="Hume D.A."/>
            <person name="Kai C."/>
            <person name="Sasaki D."/>
            <person name="Tomaru Y."/>
            <person name="Fukuda S."/>
            <person name="Kanamori-Katayama M."/>
            <person name="Suzuki M."/>
            <person name="Aoki J."/>
            <person name="Arakawa T."/>
            <person name="Iida J."/>
            <person name="Imamura K."/>
            <person name="Itoh M."/>
            <person name="Kato T."/>
            <person name="Kawaji H."/>
            <person name="Kawagashira N."/>
            <person name="Kawashima T."/>
            <person name="Kojima M."/>
            <person name="Kondo S."/>
            <person name="Konno H."/>
            <person name="Nakano K."/>
            <person name="Ninomiya N."/>
            <person name="Nishio T."/>
            <person name="Okada M."/>
            <person name="Plessy C."/>
            <person name="Shibata K."/>
            <person name="Shiraki T."/>
            <person name="Suzuki S."/>
            <person name="Tagami M."/>
            <person name="Waki K."/>
            <person name="Watahiki A."/>
            <person name="Okamura-Oho Y."/>
            <person name="Suzuki H."/>
            <person name="Kawai J."/>
            <person name="Hayashizaki Y."/>
        </authorList>
    </citation>
    <scope>NUCLEOTIDE SEQUENCE [LARGE SCALE MRNA]</scope>
    <source>
        <strain>C57BL/6J</strain>
        <tissue>Kidney</tissue>
    </source>
</reference>
<reference key="2">
    <citation type="journal article" date="2004" name="Genome Res.">
        <title>The status, quality, and expansion of the NIH full-length cDNA project: the Mammalian Gene Collection (MGC).</title>
        <authorList>
            <consortium name="The MGC Project Team"/>
        </authorList>
    </citation>
    <scope>NUCLEOTIDE SEQUENCE [LARGE SCALE MRNA]</scope>
    <source>
        <strain>FVB/N</strain>
        <tissue>Liver</tissue>
    </source>
</reference>
<sequence length="308" mass="33376">MDPEVSLLLLCPLGGLSQEQVAVELSPAHDRRPLPGGDKAITAIWETRQQAQPWIFDAPKFRLHSATLVSSSPEPQLLLHLGLTSYRDFLGTNWSSSASWLRQQGAADWGDKQAYLADPLGVGAALVTADDFLVFLRRSQQVAEAPGLVDVPGGHPEPQALCSGGIPRHKDLPGLLVVRELFSSVLQEICDEVNLPLHTLSQPLLLGIACNETSAGRASAEFYVQCSLTSEEVRSYYLSGGPEAHESTGIIFVETQRVQRLQETEMWAQLCPSAKGAILLYNRHPPLQSGVGKSHLSHPSAPALSLQL</sequence>
<comment type="function">
    <text evidence="1">Hydrolyzes UDP-glucose to glucose 1-phosphate and UMP and UDP-galactose to galactose 1-phosphate and UMP. Preferred substrate is UDP-glucose.</text>
</comment>
<comment type="catalytic activity">
    <reaction evidence="1">
        <text>UDP-sugar + H2O = UMP + alpha-D-aldose 1-phosphate.</text>
        <dbReference type="EC" id="3.6.1.45"/>
    </reaction>
</comment>
<comment type="cofactor">
    <cofactor evidence="1">
        <name>Mg(2+)</name>
        <dbReference type="ChEBI" id="CHEBI:18420"/>
    </cofactor>
</comment>
<comment type="similarity">
    <text evidence="3">Belongs to the Nudix hydrolase family.</text>
</comment>
<evidence type="ECO:0000250" key="1">
    <source>
        <dbReference type="UniProtKB" id="Q9BRQ3"/>
    </source>
</evidence>
<evidence type="ECO:0000255" key="2">
    <source>
        <dbReference type="PROSITE-ProRule" id="PRU00794"/>
    </source>
</evidence>
<evidence type="ECO:0000305" key="3"/>